<keyword id="KW-0240">DNA-directed RNA polymerase</keyword>
<keyword id="KW-0548">Nucleotidyltransferase</keyword>
<keyword id="KW-0804">Transcription</keyword>
<keyword id="KW-0808">Transferase</keyword>
<organism>
    <name type="scientific">Histophilus somni (strain 2336)</name>
    <name type="common">Haemophilus somnus</name>
    <dbReference type="NCBI Taxonomy" id="228400"/>
    <lineage>
        <taxon>Bacteria</taxon>
        <taxon>Pseudomonadati</taxon>
        <taxon>Pseudomonadota</taxon>
        <taxon>Gammaproteobacteria</taxon>
        <taxon>Pasteurellales</taxon>
        <taxon>Pasteurellaceae</taxon>
        <taxon>Histophilus</taxon>
    </lineage>
</organism>
<reference key="1">
    <citation type="submission" date="2008-02" db="EMBL/GenBank/DDBJ databases">
        <title>Complete sequence of Haemophilus somnus 2336.</title>
        <authorList>
            <consortium name="US DOE Joint Genome Institute"/>
            <person name="Siddaramappa S."/>
            <person name="Duncan A.J."/>
            <person name="Challacombe J.F."/>
            <person name="Rainey D."/>
            <person name="Gillaspy A.F."/>
            <person name="Carson M."/>
            <person name="Gipson J."/>
            <person name="Gipson M."/>
            <person name="Bruce D."/>
            <person name="Detter J.C."/>
            <person name="Han C.S."/>
            <person name="Land M."/>
            <person name="Tapia R."/>
            <person name="Thompson L.S."/>
            <person name="Orvis J."/>
            <person name="Zaitshik J."/>
            <person name="Barnes G."/>
            <person name="Brettin T.S."/>
            <person name="Dyer D.W."/>
            <person name="Inzana T.J."/>
        </authorList>
    </citation>
    <scope>NUCLEOTIDE SEQUENCE [LARGE SCALE GENOMIC DNA]</scope>
    <source>
        <strain>2336</strain>
    </source>
</reference>
<accession>B0URZ6</accession>
<feature type="chain" id="PRO_1000086372" description="DNA-directed RNA polymerase subunit beta">
    <location>
        <begin position="1"/>
        <end position="1342"/>
    </location>
</feature>
<dbReference type="EC" id="2.7.7.6" evidence="1"/>
<dbReference type="EMBL" id="CP000947">
    <property type="protein sequence ID" value="ACA32204.1"/>
    <property type="molecule type" value="Genomic_DNA"/>
</dbReference>
<dbReference type="RefSeq" id="WP_012341386.1">
    <property type="nucleotide sequence ID" value="NC_010519.1"/>
</dbReference>
<dbReference type="SMR" id="B0URZ6"/>
<dbReference type="STRING" id="228400.HSM_0553"/>
<dbReference type="GeneID" id="31486835"/>
<dbReference type="KEGG" id="hsm:HSM_0553"/>
<dbReference type="HOGENOM" id="CLU_000524_4_0_6"/>
<dbReference type="GO" id="GO:0000428">
    <property type="term" value="C:DNA-directed RNA polymerase complex"/>
    <property type="evidence" value="ECO:0007669"/>
    <property type="project" value="UniProtKB-KW"/>
</dbReference>
<dbReference type="GO" id="GO:0003677">
    <property type="term" value="F:DNA binding"/>
    <property type="evidence" value="ECO:0007669"/>
    <property type="project" value="UniProtKB-UniRule"/>
</dbReference>
<dbReference type="GO" id="GO:0003899">
    <property type="term" value="F:DNA-directed RNA polymerase activity"/>
    <property type="evidence" value="ECO:0007669"/>
    <property type="project" value="UniProtKB-UniRule"/>
</dbReference>
<dbReference type="GO" id="GO:0032549">
    <property type="term" value="F:ribonucleoside binding"/>
    <property type="evidence" value="ECO:0007669"/>
    <property type="project" value="InterPro"/>
</dbReference>
<dbReference type="GO" id="GO:0006351">
    <property type="term" value="P:DNA-templated transcription"/>
    <property type="evidence" value="ECO:0007669"/>
    <property type="project" value="UniProtKB-UniRule"/>
</dbReference>
<dbReference type="CDD" id="cd00653">
    <property type="entry name" value="RNA_pol_B_RPB2"/>
    <property type="match status" value="1"/>
</dbReference>
<dbReference type="FunFam" id="2.40.270.10:FF:000003">
    <property type="entry name" value="DNA-directed RNA polymerase subunit beta"/>
    <property type="match status" value="1"/>
</dbReference>
<dbReference type="FunFam" id="2.40.270.10:FF:000004">
    <property type="entry name" value="DNA-directed RNA polymerase subunit beta"/>
    <property type="match status" value="1"/>
</dbReference>
<dbReference type="FunFam" id="2.40.50.100:FF:000006">
    <property type="entry name" value="DNA-directed RNA polymerase subunit beta"/>
    <property type="match status" value="1"/>
</dbReference>
<dbReference type="FunFam" id="2.40.50.150:FF:000001">
    <property type="entry name" value="DNA-directed RNA polymerase subunit beta"/>
    <property type="match status" value="1"/>
</dbReference>
<dbReference type="FunFam" id="3.90.1100.10:FF:000002">
    <property type="entry name" value="DNA-directed RNA polymerase subunit beta"/>
    <property type="match status" value="1"/>
</dbReference>
<dbReference type="FunFam" id="3.90.1110.10:FF:000001">
    <property type="entry name" value="DNA-directed RNA polymerase subunit beta"/>
    <property type="match status" value="1"/>
</dbReference>
<dbReference type="FunFam" id="3.90.1110.10:FF:000004">
    <property type="entry name" value="DNA-directed RNA polymerase subunit beta"/>
    <property type="match status" value="1"/>
</dbReference>
<dbReference type="FunFam" id="3.90.1800.10:FF:000001">
    <property type="entry name" value="DNA-directed RNA polymerase subunit beta"/>
    <property type="match status" value="1"/>
</dbReference>
<dbReference type="Gene3D" id="2.40.50.100">
    <property type="match status" value="1"/>
</dbReference>
<dbReference type="Gene3D" id="2.40.50.150">
    <property type="match status" value="1"/>
</dbReference>
<dbReference type="Gene3D" id="3.90.1100.10">
    <property type="match status" value="3"/>
</dbReference>
<dbReference type="Gene3D" id="6.10.140.1670">
    <property type="match status" value="1"/>
</dbReference>
<dbReference type="Gene3D" id="2.40.270.10">
    <property type="entry name" value="DNA-directed RNA polymerase, subunit 2, domain 6"/>
    <property type="match status" value="1"/>
</dbReference>
<dbReference type="Gene3D" id="3.90.1800.10">
    <property type="entry name" value="RNA polymerase alpha subunit dimerisation domain"/>
    <property type="match status" value="1"/>
</dbReference>
<dbReference type="HAMAP" id="MF_01321">
    <property type="entry name" value="RNApol_bact_RpoB"/>
    <property type="match status" value="1"/>
</dbReference>
<dbReference type="InterPro" id="IPR019462">
    <property type="entry name" value="DNA-dir_RNA_pol_bsu_external_1"/>
</dbReference>
<dbReference type="InterPro" id="IPR015712">
    <property type="entry name" value="DNA-dir_RNA_pol_su2"/>
</dbReference>
<dbReference type="InterPro" id="IPR007120">
    <property type="entry name" value="DNA-dir_RNAP_su2_dom"/>
</dbReference>
<dbReference type="InterPro" id="IPR037033">
    <property type="entry name" value="DNA-dir_RNAP_su2_hyb_sf"/>
</dbReference>
<dbReference type="InterPro" id="IPR010243">
    <property type="entry name" value="RNA_pol_bsu_bac"/>
</dbReference>
<dbReference type="InterPro" id="IPR007121">
    <property type="entry name" value="RNA_pol_bsu_CS"/>
</dbReference>
<dbReference type="InterPro" id="IPR007644">
    <property type="entry name" value="RNA_pol_bsu_protrusion"/>
</dbReference>
<dbReference type="InterPro" id="IPR007642">
    <property type="entry name" value="RNA_pol_Rpb2_2"/>
</dbReference>
<dbReference type="InterPro" id="IPR007645">
    <property type="entry name" value="RNA_pol_Rpb2_3"/>
</dbReference>
<dbReference type="InterPro" id="IPR007641">
    <property type="entry name" value="RNA_pol_Rpb2_7"/>
</dbReference>
<dbReference type="InterPro" id="IPR014724">
    <property type="entry name" value="RNA_pol_RPB2_OB-fold"/>
</dbReference>
<dbReference type="NCBIfam" id="NF001616">
    <property type="entry name" value="PRK00405.1"/>
    <property type="match status" value="1"/>
</dbReference>
<dbReference type="NCBIfam" id="TIGR02013">
    <property type="entry name" value="rpoB"/>
    <property type="match status" value="1"/>
</dbReference>
<dbReference type="PANTHER" id="PTHR20856">
    <property type="entry name" value="DNA-DIRECTED RNA POLYMERASE I SUBUNIT 2"/>
    <property type="match status" value="1"/>
</dbReference>
<dbReference type="Pfam" id="PF04563">
    <property type="entry name" value="RNA_pol_Rpb2_1"/>
    <property type="match status" value="1"/>
</dbReference>
<dbReference type="Pfam" id="PF04561">
    <property type="entry name" value="RNA_pol_Rpb2_2"/>
    <property type="match status" value="2"/>
</dbReference>
<dbReference type="Pfam" id="PF04565">
    <property type="entry name" value="RNA_pol_Rpb2_3"/>
    <property type="match status" value="1"/>
</dbReference>
<dbReference type="Pfam" id="PF10385">
    <property type="entry name" value="RNA_pol_Rpb2_45"/>
    <property type="match status" value="1"/>
</dbReference>
<dbReference type="Pfam" id="PF00562">
    <property type="entry name" value="RNA_pol_Rpb2_6"/>
    <property type="match status" value="1"/>
</dbReference>
<dbReference type="Pfam" id="PF04560">
    <property type="entry name" value="RNA_pol_Rpb2_7"/>
    <property type="match status" value="1"/>
</dbReference>
<dbReference type="SUPFAM" id="SSF64484">
    <property type="entry name" value="beta and beta-prime subunits of DNA dependent RNA-polymerase"/>
    <property type="match status" value="1"/>
</dbReference>
<dbReference type="PROSITE" id="PS01166">
    <property type="entry name" value="RNA_POL_BETA"/>
    <property type="match status" value="1"/>
</dbReference>
<comment type="function">
    <text evidence="1">DNA-dependent RNA polymerase catalyzes the transcription of DNA into RNA using the four ribonucleoside triphosphates as substrates.</text>
</comment>
<comment type="catalytic activity">
    <reaction evidence="1">
        <text>RNA(n) + a ribonucleoside 5'-triphosphate = RNA(n+1) + diphosphate</text>
        <dbReference type="Rhea" id="RHEA:21248"/>
        <dbReference type="Rhea" id="RHEA-COMP:14527"/>
        <dbReference type="Rhea" id="RHEA-COMP:17342"/>
        <dbReference type="ChEBI" id="CHEBI:33019"/>
        <dbReference type="ChEBI" id="CHEBI:61557"/>
        <dbReference type="ChEBI" id="CHEBI:140395"/>
        <dbReference type="EC" id="2.7.7.6"/>
    </reaction>
</comment>
<comment type="subunit">
    <text evidence="1">The RNAP catalytic core consists of 2 alpha, 1 beta, 1 beta' and 1 omega subunit. When a sigma factor is associated with the core the holoenzyme is formed, which can initiate transcription.</text>
</comment>
<comment type="similarity">
    <text evidence="1">Belongs to the RNA polymerase beta chain family.</text>
</comment>
<protein>
    <recommendedName>
        <fullName evidence="1">DNA-directed RNA polymerase subunit beta</fullName>
        <shortName evidence="1">RNAP subunit beta</shortName>
        <ecNumber evidence="1">2.7.7.6</ecNumber>
    </recommendedName>
    <alternativeName>
        <fullName evidence="1">RNA polymerase subunit beta</fullName>
    </alternativeName>
    <alternativeName>
        <fullName evidence="1">Transcriptase subunit beta</fullName>
    </alternativeName>
</protein>
<sequence>MVYSYTEKKRIRKSFGKRPQVLNVPYLLTIQLDSFDKFIQRDPDGQQGLEAAFRSIFPIVSNNGNTELQYVSYQLGEPVFDVRECQIRGTTYAASLRVKLRLVSYDKDAASGTIKDIKEQEVYMGEIPLMTSNGTFVINGTERVVVSQLHRSPGVFFDSDKGKTHSSGKVLYNARIIPYRGSWLDFEFDPKDNLYARIDRRRKLPATIILRALNYTTEEILDLFFDKVSFEIKDNKLLMTLVPERLRGETASFDIEANGKVYIERGRRITARHIKALEKDKITQVEVPTEYIVGKVSAKDYVDLTTGEIICPANMEISLELLEKLSQAGYKNIETLFTNDLDFGPYISETLRVDPSYDRLSALVEIYRMMRPGEPPTKEAAEGLFDNLFFSSERYDLSAVGRMKFNRSLGIEDTTGSGTLSKEDIVNVMRKLIDIRNGRGEVDDIDHLGNRRIRSVGEMAENQFRIGLVRVERAVKERLSLGDLESVTPQDLINAKPISAAVKEFFGSSQLSQFMDQNNPLSEVTHKRRISALGPGGLTRERAGFEVRDVHATHYGRVCPIETPEGPNIGLINSLSVYARTNDYGFLETPYRKVVNGQVTEEIEYLSAIEEGKYVIAQANSNLDNELRFTDAFVTCRGEHGESGLYRPEEIHYMDVSTQQVVSVAAALIPFLEHDDANRALMGANMQRQAVPTLRADKPLVGTGMEKPVALDSGVAVVAKRGGTIQYVDASRIVVKVNEDETIAGEAGIDIYNLIKYTRSNQNTCINQIPCVQLGEPIERGEILADGPSTDLGELALGQNMRVAFMPWNGYNFEDSMLVSERVVQEDRFTTIHIQELSCVARDTKLGSEEITADIPNVGEAALSKLDESGIVYIGAEVKGGDILVGKVTPKGETQLTPEEKLLRAIFGEKASDVKDSSLRVPNGTSGTVIDVQVFTRDGVEKDKRALEIEEMQLKQAKKDLVEELEILEAGLFARVRNLLLSGGFNDKQLENLDRTQWLEQTLVDEDKQNQLEQLAEQYEELRKDFEHKLEIKRSKIIQGDDLAPGVLKVVKVYLAVKRQIQPGDKMAGRHGNKGVISKINPVEDMPYDENGQPVDIVLNPLGVPSRMNIGQILETHLGLAAKGIGDQINAMIKQKQDVEKLRGYIQKAYDLGDGSQKVDLSTFTDEEVLRLAKNLRKGMPLATPVFDGAHEKEIKALLELGGLPTSGQIILFDGRTGEKFERPVTVGYMYMLKLNHLVDDKMHARSTGSYSLVTQQPLGGKAQFGGQRFGEMEVWALEAYGAAYTLQEMLTVKSDDVNGRTKMYKNIVGGTHQMDPGTPESFNVIMKEIRSLGINIDLDEE</sequence>
<proteinExistence type="inferred from homology"/>
<name>RPOB_HISS2</name>
<gene>
    <name evidence="1" type="primary">rpoB</name>
    <name type="ordered locus">HSM_0553</name>
</gene>
<evidence type="ECO:0000255" key="1">
    <source>
        <dbReference type="HAMAP-Rule" id="MF_01321"/>
    </source>
</evidence>